<protein>
    <recommendedName>
        <fullName>Kininogen-2</fullName>
    </recommendedName>
    <alternativeName>
        <fullName>BOK-2</fullName>
    </alternativeName>
    <component>
        <recommendedName>
            <fullName>[Thr6]-bradykinin</fullName>
        </recommendedName>
    </component>
    <component>
        <recommendedName>
            <fullName>Bradykinin inhibitor peptide DV-28</fullName>
            <shortName>DV-28 amide</shortName>
        </recommendedName>
    </component>
</protein>
<dbReference type="EMBL" id="AJ347942">
    <property type="protein sequence ID" value="CAC70660.1"/>
    <property type="molecule type" value="mRNA"/>
</dbReference>
<dbReference type="GO" id="GO:0005576">
    <property type="term" value="C:extracellular region"/>
    <property type="evidence" value="ECO:0000314"/>
    <property type="project" value="UniProtKB"/>
</dbReference>
<dbReference type="GO" id="GO:0005179">
    <property type="term" value="F:hormone activity"/>
    <property type="evidence" value="ECO:0007669"/>
    <property type="project" value="InterPro"/>
</dbReference>
<dbReference type="GO" id="GO:0090729">
    <property type="term" value="F:toxin activity"/>
    <property type="evidence" value="ECO:0007669"/>
    <property type="project" value="UniProtKB-KW"/>
</dbReference>
<dbReference type="GO" id="GO:0006952">
    <property type="term" value="P:defense response"/>
    <property type="evidence" value="ECO:0000314"/>
    <property type="project" value="UniProtKB"/>
</dbReference>
<dbReference type="GO" id="GO:0045776">
    <property type="term" value="P:negative regulation of blood pressure"/>
    <property type="evidence" value="ECO:0000314"/>
    <property type="project" value="UniProtKB"/>
</dbReference>
<dbReference type="GO" id="GO:0045987">
    <property type="term" value="P:positive regulation of smooth muscle contraction"/>
    <property type="evidence" value="ECO:0000314"/>
    <property type="project" value="UniProtKB"/>
</dbReference>
<dbReference type="InterPro" id="IPR009608">
    <property type="entry name" value="Bradykinin"/>
</dbReference>
<dbReference type="Pfam" id="PF06753">
    <property type="entry name" value="Bradykinin"/>
    <property type="match status" value="2"/>
</dbReference>
<keyword id="KW-0027">Amidation</keyword>
<keyword id="KW-0878">Amphibian defense peptide</keyword>
<keyword id="KW-1222">Bradykinin receptor impairing toxin</keyword>
<keyword id="KW-0903">Direct protein sequencing</keyword>
<keyword id="KW-1015">Disulfide bond</keyword>
<keyword id="KW-1213">G-protein coupled receptor impairing toxin</keyword>
<keyword id="KW-0677">Repeat</keyword>
<keyword id="KW-0964">Secreted</keyword>
<keyword id="KW-0732">Signal</keyword>
<keyword id="KW-0800">Toxin</keyword>
<organism evidence="5">
    <name type="scientific">Bombina orientalis</name>
    <name type="common">Oriental fire-bellied toad</name>
    <dbReference type="NCBI Taxonomy" id="8346"/>
    <lineage>
        <taxon>Eukaryota</taxon>
        <taxon>Metazoa</taxon>
        <taxon>Chordata</taxon>
        <taxon>Craniata</taxon>
        <taxon>Vertebrata</taxon>
        <taxon>Euteleostomi</taxon>
        <taxon>Amphibia</taxon>
        <taxon>Batrachia</taxon>
        <taxon>Anura</taxon>
        <taxon>Bombinatoridae</taxon>
        <taxon>Bombina</taxon>
    </lineage>
</organism>
<proteinExistence type="evidence at protein level"/>
<name>BRK2_BOMOR</name>
<evidence type="ECO:0000250" key="1"/>
<evidence type="ECO:0000255" key="2"/>
<evidence type="ECO:0000269" key="3">
    <source>
    </source>
</evidence>
<evidence type="ECO:0000269" key="4">
    <source>
    </source>
</evidence>
<evidence type="ECO:0000305" key="5"/>
<sequence>MRLWFCLSFFVVLCLEHFPGTLADERNNRDYPIRTHLHGPHIPRNNRDYPIRTHLHGHHIPRNVPESEEKTEQFLRDLSEISRLQRRPPGFTPFRGKFHSQSLRDLSEISRLQRRPPGFTPFRGKFHSQSLRDMYEIKGFKSAHGRPRVCPPGEQCPIWVG</sequence>
<accession>P83059</accession>
<accession>Q90W15</accession>
<comment type="function">
    <molecule>[Thr6]-bradykinin</molecule>
    <text evidence="1">Inhibits ACE with a Ki of 1.6 uM, and targets B2 bradykinin receptor (BDKRB2). Provokes contraction of smooth muscle preparation (ileum). In vivo, induces an early hyperalgesic effects in living rats after intraplantar injection (By similarity).</text>
</comment>
<comment type="function">
    <molecule>Bradykinin inhibitor peptide DV-28</molecule>
    <text evidence="3 4">Inhibits the bradykinin-induced in vitro relaxation of rat arterial smooth muscle and constriction of intestinal smooth muscle. May target bradykinin receptors (BDKRB).</text>
</comment>
<comment type="subcellular location">
    <subcellularLocation>
        <location evidence="3 4 5">Secreted</location>
    </subcellularLocation>
</comment>
<comment type="tissue specificity">
    <text evidence="3 4">Expressed by the skin glands.</text>
</comment>
<comment type="mass spectrometry">
    <molecule>Bradykinin inhibitor peptide DV-28</molecule>
    <text>The measured mass is that of bradykinin inhibitor peptide DV-28.</text>
</comment>
<comment type="similarity">
    <text evidence="5">Belongs to the bradykinin-related peptide family.</text>
</comment>
<reference key="1">
    <citation type="journal article" date="2002" name="Peptides">
        <title>Bradykinins and their precursor cDNAs from the skin of the fire-bellied toad (Bombina orientalis).</title>
        <authorList>
            <person name="Chen T."/>
            <person name="Orr D.F."/>
            <person name="Bjourson A.J."/>
            <person name="McClean S."/>
            <person name="O'Rourke M."/>
            <person name="Hirst D.G."/>
            <person name="Rao P."/>
            <person name="Shaw C."/>
        </authorList>
    </citation>
    <scope>NUCLEOTIDE SEQUENCE [MRNA]</scope>
    <scope>PROTEIN SEQUENCE OF 87-95 AND 115-123</scope>
    <scope>FUNCTION</scope>
    <scope>SUBCELLULAR LOCATION</scope>
    <scope>TISSUE SPECIFICITY</scope>
    <source>
        <tissue>Skin</tissue>
        <tissue>Skin secretion</tissue>
    </source>
</reference>
<reference key="2">
    <citation type="journal article" date="2010" name="Peptides">
        <title>Peptide DV-28 amide: An inhibitor of bradykinin-induced arterial smooth muscle relaxation encoded by Bombina orientalis skin kininogen-2.</title>
        <authorList>
            <person name="Wang L."/>
            <person name="Chen Y."/>
            <person name="Yang M."/>
            <person name="Zhou M."/>
            <person name="Chen T."/>
            <person name="Sui D.Y."/>
            <person name="Shaw C."/>
        </authorList>
    </citation>
    <scope>PROTEIN SEQUENCE OF 133-160</scope>
    <scope>FUNCTION</scope>
    <scope>SUBCELLULAR LOCATION</scope>
    <scope>TISSUE SPECIFICITY</scope>
    <scope>MASS SPECTROMETRY</scope>
    <scope>DISULFIDE BOND</scope>
    <scope>AMIDATION AT VAL-160</scope>
    <source>
        <tissue>Skin secretion</tissue>
    </source>
</reference>
<feature type="signal peptide" evidence="2">
    <location>
        <begin position="1"/>
        <end position="23"/>
    </location>
</feature>
<feature type="chain" id="PRO_0000003434" description="Kininogen-2">
    <location>
        <begin position="24"/>
        <end position="161"/>
    </location>
</feature>
<feature type="peptide" id="PRO_0000003435" description="[Thr6]-bradykinin">
    <location>
        <begin position="87"/>
        <end position="95"/>
    </location>
</feature>
<feature type="peptide" id="PRO_0000003436" description="[Thr6]-bradykinin">
    <location>
        <begin position="115"/>
        <end position="123"/>
    </location>
</feature>
<feature type="peptide" id="PRO_0000401148" description="Bradykinin inhibitor peptide DV-28">
    <location>
        <begin position="133"/>
        <end position="160"/>
    </location>
</feature>
<feature type="modified residue" description="Valine amide" evidence="4">
    <location>
        <position position="160"/>
    </location>
</feature>
<feature type="disulfide bond" evidence="4">
    <location>
        <begin position="150"/>
        <end position="156"/>
    </location>
</feature>